<reference key="1">
    <citation type="journal article" date="2008" name="J. Bacteriol.">
        <title>Comparative genome sequence analysis of multidrug-resistant Acinetobacter baumannii.</title>
        <authorList>
            <person name="Adams M.D."/>
            <person name="Goglin K."/>
            <person name="Molyneaux N."/>
            <person name="Hujer K.M."/>
            <person name="Lavender H."/>
            <person name="Jamison J.J."/>
            <person name="MacDonald I.J."/>
            <person name="Martin K.M."/>
            <person name="Russo T."/>
            <person name="Campagnari A.A."/>
            <person name="Hujer A.M."/>
            <person name="Bonomo R.A."/>
            <person name="Gill S.R."/>
        </authorList>
    </citation>
    <scope>NUCLEOTIDE SEQUENCE [LARGE SCALE GENOMIC DNA]</scope>
    <source>
        <strain>AB0057</strain>
    </source>
</reference>
<sequence length="464" mass="50274">MSSGRIIQIIGAVIDVEFERTSVPKIYDALQVDGTETTLEVQQQLGDGVVRTIAMGSTEGLKRGLTVTSTNAPISVPVGTATLGRIMDVLGRPIDEAGPVATEERLPIHRQAPSYAEQAASTDLLETGIKVIDLLCPFAKGGKVGLFGGAGVGKTVNMMELINNIAKAHSGLSVFAGVGERTREGNDFYHEMKDSNVLDKVAMVYGQMNEPPGNRLRVALTGLTMAEYFRDEKDENGKGRDVLLFVDNIYRYTLAGTEVSALLGRMPSAVGYQPTLAEEMGVLQERITSTKSGSITSIQAVYVPADDLTDPSPATTFAHLDATVVLSRDIASSGIYPAIDPLDSTSRQLDPLVVGQEHYEIARAVQNVLQRYKELKDIIAILGMDELAEEDKLVVYRARKIQRFFSQPFHVAEVFTGAPGKLVPLKETIRGFKGLLAGEYDHIPEQAFYMVGGIDEVIAKAEKL</sequence>
<accession>B7I1W4</accession>
<evidence type="ECO:0000255" key="1">
    <source>
        <dbReference type="HAMAP-Rule" id="MF_01347"/>
    </source>
</evidence>
<protein>
    <recommendedName>
        <fullName evidence="1">ATP synthase subunit beta</fullName>
        <ecNumber evidence="1">7.1.2.2</ecNumber>
    </recommendedName>
    <alternativeName>
        <fullName evidence="1">ATP synthase F1 sector subunit beta</fullName>
    </alternativeName>
    <alternativeName>
        <fullName evidence="1">F-ATPase subunit beta</fullName>
    </alternativeName>
</protein>
<dbReference type="EC" id="7.1.2.2" evidence="1"/>
<dbReference type="EMBL" id="CP001182">
    <property type="protein sequence ID" value="ACJ39624.1"/>
    <property type="molecule type" value="Genomic_DNA"/>
</dbReference>
<dbReference type="RefSeq" id="WP_000094481.1">
    <property type="nucleotide sequence ID" value="NC_011586.2"/>
</dbReference>
<dbReference type="SMR" id="B7I1W4"/>
<dbReference type="GeneID" id="92892167"/>
<dbReference type="KEGG" id="abn:AB57_0193"/>
<dbReference type="HOGENOM" id="CLU_022398_0_2_6"/>
<dbReference type="Proteomes" id="UP000007094">
    <property type="component" value="Chromosome"/>
</dbReference>
<dbReference type="GO" id="GO:0005886">
    <property type="term" value="C:plasma membrane"/>
    <property type="evidence" value="ECO:0007669"/>
    <property type="project" value="UniProtKB-SubCell"/>
</dbReference>
<dbReference type="GO" id="GO:0045259">
    <property type="term" value="C:proton-transporting ATP synthase complex"/>
    <property type="evidence" value="ECO:0007669"/>
    <property type="project" value="UniProtKB-KW"/>
</dbReference>
<dbReference type="GO" id="GO:0005524">
    <property type="term" value="F:ATP binding"/>
    <property type="evidence" value="ECO:0007669"/>
    <property type="project" value="UniProtKB-UniRule"/>
</dbReference>
<dbReference type="GO" id="GO:0016887">
    <property type="term" value="F:ATP hydrolysis activity"/>
    <property type="evidence" value="ECO:0007669"/>
    <property type="project" value="InterPro"/>
</dbReference>
<dbReference type="GO" id="GO:0046933">
    <property type="term" value="F:proton-transporting ATP synthase activity, rotational mechanism"/>
    <property type="evidence" value="ECO:0007669"/>
    <property type="project" value="UniProtKB-UniRule"/>
</dbReference>
<dbReference type="CDD" id="cd18110">
    <property type="entry name" value="ATP-synt_F1_beta_C"/>
    <property type="match status" value="1"/>
</dbReference>
<dbReference type="CDD" id="cd18115">
    <property type="entry name" value="ATP-synt_F1_beta_N"/>
    <property type="match status" value="1"/>
</dbReference>
<dbReference type="CDD" id="cd01133">
    <property type="entry name" value="F1-ATPase_beta_CD"/>
    <property type="match status" value="1"/>
</dbReference>
<dbReference type="FunFam" id="1.10.1140.10:FF:000001">
    <property type="entry name" value="ATP synthase subunit beta"/>
    <property type="match status" value="1"/>
</dbReference>
<dbReference type="FunFam" id="3.40.50.300:FF:000004">
    <property type="entry name" value="ATP synthase subunit beta"/>
    <property type="match status" value="1"/>
</dbReference>
<dbReference type="Gene3D" id="2.40.10.170">
    <property type="match status" value="1"/>
</dbReference>
<dbReference type="Gene3D" id="1.10.1140.10">
    <property type="entry name" value="Bovine Mitochondrial F1-atpase, Atp Synthase Beta Chain, Chain D, domain 3"/>
    <property type="match status" value="1"/>
</dbReference>
<dbReference type="Gene3D" id="3.40.50.300">
    <property type="entry name" value="P-loop containing nucleotide triphosphate hydrolases"/>
    <property type="match status" value="1"/>
</dbReference>
<dbReference type="HAMAP" id="MF_01347">
    <property type="entry name" value="ATP_synth_beta_bact"/>
    <property type="match status" value="1"/>
</dbReference>
<dbReference type="InterPro" id="IPR003593">
    <property type="entry name" value="AAA+_ATPase"/>
</dbReference>
<dbReference type="InterPro" id="IPR055190">
    <property type="entry name" value="ATP-synt_VA_C"/>
</dbReference>
<dbReference type="InterPro" id="IPR005722">
    <property type="entry name" value="ATP_synth_F1_bsu"/>
</dbReference>
<dbReference type="InterPro" id="IPR020003">
    <property type="entry name" value="ATPase_a/bsu_AS"/>
</dbReference>
<dbReference type="InterPro" id="IPR050053">
    <property type="entry name" value="ATPase_alpha/beta_chains"/>
</dbReference>
<dbReference type="InterPro" id="IPR004100">
    <property type="entry name" value="ATPase_F1/V1/A1_a/bsu_N"/>
</dbReference>
<dbReference type="InterPro" id="IPR036121">
    <property type="entry name" value="ATPase_F1/V1/A1_a/bsu_N_sf"/>
</dbReference>
<dbReference type="InterPro" id="IPR000194">
    <property type="entry name" value="ATPase_F1/V1/A1_a/bsu_nucl-bd"/>
</dbReference>
<dbReference type="InterPro" id="IPR024034">
    <property type="entry name" value="ATPase_F1/V1_b/a_C"/>
</dbReference>
<dbReference type="InterPro" id="IPR027417">
    <property type="entry name" value="P-loop_NTPase"/>
</dbReference>
<dbReference type="NCBIfam" id="TIGR01039">
    <property type="entry name" value="atpD"/>
    <property type="match status" value="1"/>
</dbReference>
<dbReference type="PANTHER" id="PTHR15184">
    <property type="entry name" value="ATP SYNTHASE"/>
    <property type="match status" value="1"/>
</dbReference>
<dbReference type="PANTHER" id="PTHR15184:SF71">
    <property type="entry name" value="ATP SYNTHASE SUBUNIT BETA, MITOCHONDRIAL"/>
    <property type="match status" value="1"/>
</dbReference>
<dbReference type="Pfam" id="PF00006">
    <property type="entry name" value="ATP-synt_ab"/>
    <property type="match status" value="1"/>
</dbReference>
<dbReference type="Pfam" id="PF02874">
    <property type="entry name" value="ATP-synt_ab_N"/>
    <property type="match status" value="1"/>
</dbReference>
<dbReference type="Pfam" id="PF22919">
    <property type="entry name" value="ATP-synt_VA_C"/>
    <property type="match status" value="1"/>
</dbReference>
<dbReference type="SMART" id="SM00382">
    <property type="entry name" value="AAA"/>
    <property type="match status" value="1"/>
</dbReference>
<dbReference type="SUPFAM" id="SSF47917">
    <property type="entry name" value="C-terminal domain of alpha and beta subunits of F1 ATP synthase"/>
    <property type="match status" value="1"/>
</dbReference>
<dbReference type="SUPFAM" id="SSF50615">
    <property type="entry name" value="N-terminal domain of alpha and beta subunits of F1 ATP synthase"/>
    <property type="match status" value="1"/>
</dbReference>
<dbReference type="SUPFAM" id="SSF52540">
    <property type="entry name" value="P-loop containing nucleoside triphosphate hydrolases"/>
    <property type="match status" value="1"/>
</dbReference>
<dbReference type="PROSITE" id="PS00152">
    <property type="entry name" value="ATPASE_ALPHA_BETA"/>
    <property type="match status" value="1"/>
</dbReference>
<proteinExistence type="inferred from homology"/>
<name>ATPB_ACIB5</name>
<keyword id="KW-0066">ATP synthesis</keyword>
<keyword id="KW-0067">ATP-binding</keyword>
<keyword id="KW-0997">Cell inner membrane</keyword>
<keyword id="KW-1003">Cell membrane</keyword>
<keyword id="KW-0139">CF(1)</keyword>
<keyword id="KW-0375">Hydrogen ion transport</keyword>
<keyword id="KW-0406">Ion transport</keyword>
<keyword id="KW-0472">Membrane</keyword>
<keyword id="KW-0547">Nucleotide-binding</keyword>
<keyword id="KW-1278">Translocase</keyword>
<keyword id="KW-0813">Transport</keyword>
<organism>
    <name type="scientific">Acinetobacter baumannii (strain AB0057)</name>
    <dbReference type="NCBI Taxonomy" id="480119"/>
    <lineage>
        <taxon>Bacteria</taxon>
        <taxon>Pseudomonadati</taxon>
        <taxon>Pseudomonadota</taxon>
        <taxon>Gammaproteobacteria</taxon>
        <taxon>Moraxellales</taxon>
        <taxon>Moraxellaceae</taxon>
        <taxon>Acinetobacter</taxon>
        <taxon>Acinetobacter calcoaceticus/baumannii complex</taxon>
    </lineage>
</organism>
<comment type="function">
    <text evidence="1">Produces ATP from ADP in the presence of a proton gradient across the membrane. The catalytic sites are hosted primarily by the beta subunits.</text>
</comment>
<comment type="catalytic activity">
    <reaction evidence="1">
        <text>ATP + H2O + 4 H(+)(in) = ADP + phosphate + 5 H(+)(out)</text>
        <dbReference type="Rhea" id="RHEA:57720"/>
        <dbReference type="ChEBI" id="CHEBI:15377"/>
        <dbReference type="ChEBI" id="CHEBI:15378"/>
        <dbReference type="ChEBI" id="CHEBI:30616"/>
        <dbReference type="ChEBI" id="CHEBI:43474"/>
        <dbReference type="ChEBI" id="CHEBI:456216"/>
        <dbReference type="EC" id="7.1.2.2"/>
    </reaction>
</comment>
<comment type="subunit">
    <text evidence="1">F-type ATPases have 2 components, CF(1) - the catalytic core - and CF(0) - the membrane proton channel. CF(1) has five subunits: alpha(3), beta(3), gamma(1), delta(1), epsilon(1). CF(0) has three main subunits: a(1), b(2) and c(9-12). The alpha and beta chains form an alternating ring which encloses part of the gamma chain. CF(1) is attached to CF(0) by a central stalk formed by the gamma and epsilon chains, while a peripheral stalk is formed by the delta and b chains.</text>
</comment>
<comment type="subcellular location">
    <subcellularLocation>
        <location evidence="1">Cell inner membrane</location>
        <topology evidence="1">Peripheral membrane protein</topology>
    </subcellularLocation>
</comment>
<comment type="similarity">
    <text evidence="1">Belongs to the ATPase alpha/beta chains family.</text>
</comment>
<feature type="chain" id="PRO_1000143461" description="ATP synthase subunit beta">
    <location>
        <begin position="1"/>
        <end position="464"/>
    </location>
</feature>
<feature type="binding site" evidence="1">
    <location>
        <begin position="148"/>
        <end position="155"/>
    </location>
    <ligand>
        <name>ATP</name>
        <dbReference type="ChEBI" id="CHEBI:30616"/>
    </ligand>
</feature>
<gene>
    <name evidence="1" type="primary">atpD</name>
    <name type="ordered locus">AB57_0193</name>
</gene>